<feature type="chain" id="PRO_1000124690" description="3-phosphoshikimate 1-carboxyvinyltransferase">
    <location>
        <begin position="1"/>
        <end position="428"/>
    </location>
</feature>
<feature type="active site" description="Proton acceptor" evidence="1">
    <location>
        <position position="316"/>
    </location>
</feature>
<feature type="binding site" evidence="1">
    <location>
        <position position="22"/>
    </location>
    <ligand>
        <name>3-phosphoshikimate</name>
        <dbReference type="ChEBI" id="CHEBI:145989"/>
    </ligand>
</feature>
<feature type="binding site" evidence="1">
    <location>
        <position position="22"/>
    </location>
    <ligand>
        <name>phosphoenolpyruvate</name>
        <dbReference type="ChEBI" id="CHEBI:58702"/>
    </ligand>
</feature>
<feature type="binding site" evidence="1">
    <location>
        <position position="23"/>
    </location>
    <ligand>
        <name>3-phosphoshikimate</name>
        <dbReference type="ChEBI" id="CHEBI:145989"/>
    </ligand>
</feature>
<feature type="binding site" evidence="1">
    <location>
        <position position="27"/>
    </location>
    <ligand>
        <name>3-phosphoshikimate</name>
        <dbReference type="ChEBI" id="CHEBI:145989"/>
    </ligand>
</feature>
<feature type="binding site" evidence="1">
    <location>
        <position position="95"/>
    </location>
    <ligand>
        <name>phosphoenolpyruvate</name>
        <dbReference type="ChEBI" id="CHEBI:58702"/>
    </ligand>
</feature>
<feature type="binding site" evidence="1">
    <location>
        <position position="123"/>
    </location>
    <ligand>
        <name>phosphoenolpyruvate</name>
        <dbReference type="ChEBI" id="CHEBI:58702"/>
    </ligand>
</feature>
<feature type="binding site" evidence="1">
    <location>
        <position position="170"/>
    </location>
    <ligand>
        <name>3-phosphoshikimate</name>
        <dbReference type="ChEBI" id="CHEBI:145989"/>
    </ligand>
</feature>
<feature type="binding site" evidence="1">
    <location>
        <position position="171"/>
    </location>
    <ligand>
        <name>3-phosphoshikimate</name>
        <dbReference type="ChEBI" id="CHEBI:145989"/>
    </ligand>
</feature>
<feature type="binding site" evidence="1">
    <location>
        <position position="172"/>
    </location>
    <ligand>
        <name>3-phosphoshikimate</name>
        <dbReference type="ChEBI" id="CHEBI:145989"/>
    </ligand>
</feature>
<feature type="binding site" evidence="1">
    <location>
        <position position="172"/>
    </location>
    <ligand>
        <name>phosphoenolpyruvate</name>
        <dbReference type="ChEBI" id="CHEBI:58702"/>
    </ligand>
</feature>
<feature type="binding site" evidence="1">
    <location>
        <position position="197"/>
    </location>
    <ligand>
        <name>3-phosphoshikimate</name>
        <dbReference type="ChEBI" id="CHEBI:145989"/>
    </ligand>
</feature>
<feature type="binding site" evidence="1">
    <location>
        <position position="316"/>
    </location>
    <ligand>
        <name>3-phosphoshikimate</name>
        <dbReference type="ChEBI" id="CHEBI:145989"/>
    </ligand>
</feature>
<feature type="binding site" evidence="1">
    <location>
        <position position="343"/>
    </location>
    <ligand>
        <name>3-phosphoshikimate</name>
        <dbReference type="ChEBI" id="CHEBI:145989"/>
    </ligand>
</feature>
<feature type="binding site" evidence="1">
    <location>
        <position position="347"/>
    </location>
    <ligand>
        <name>phosphoenolpyruvate</name>
        <dbReference type="ChEBI" id="CHEBI:58702"/>
    </ligand>
</feature>
<feature type="binding site" evidence="1">
    <location>
        <position position="390"/>
    </location>
    <ligand>
        <name>phosphoenolpyruvate</name>
        <dbReference type="ChEBI" id="CHEBI:58702"/>
    </ligand>
</feature>
<feature type="binding site" evidence="1">
    <location>
        <position position="414"/>
    </location>
    <ligand>
        <name>phosphoenolpyruvate</name>
        <dbReference type="ChEBI" id="CHEBI:58702"/>
    </ligand>
</feature>
<reference key="1">
    <citation type="journal article" date="2009" name="PLoS Genet.">
        <title>The complete genome and proteome of Laribacter hongkongensis reveal potential mechanisms for adaptations to different temperatures and habitats.</title>
        <authorList>
            <person name="Woo P.C.Y."/>
            <person name="Lau S.K.P."/>
            <person name="Tse H."/>
            <person name="Teng J.L.L."/>
            <person name="Curreem S.O."/>
            <person name="Tsang A.K.L."/>
            <person name="Fan R.Y.Y."/>
            <person name="Wong G.K.M."/>
            <person name="Huang Y."/>
            <person name="Loman N.J."/>
            <person name="Snyder L.A.S."/>
            <person name="Cai J.J."/>
            <person name="Huang J.-D."/>
            <person name="Mak W."/>
            <person name="Pallen M.J."/>
            <person name="Lok S."/>
            <person name="Yuen K.-Y."/>
        </authorList>
    </citation>
    <scope>NUCLEOTIDE SEQUENCE [LARGE SCALE GENOMIC DNA]</scope>
    <source>
        <strain>HLHK9</strain>
    </source>
</reference>
<name>AROA_LARHH</name>
<comment type="function">
    <text evidence="1">Catalyzes the transfer of the enolpyruvyl moiety of phosphoenolpyruvate (PEP) to the 5-hydroxyl of shikimate-3-phosphate (S3P) to produce enolpyruvyl shikimate-3-phosphate and inorganic phosphate.</text>
</comment>
<comment type="catalytic activity">
    <reaction evidence="1">
        <text>3-phosphoshikimate + phosphoenolpyruvate = 5-O-(1-carboxyvinyl)-3-phosphoshikimate + phosphate</text>
        <dbReference type="Rhea" id="RHEA:21256"/>
        <dbReference type="ChEBI" id="CHEBI:43474"/>
        <dbReference type="ChEBI" id="CHEBI:57701"/>
        <dbReference type="ChEBI" id="CHEBI:58702"/>
        <dbReference type="ChEBI" id="CHEBI:145989"/>
        <dbReference type="EC" id="2.5.1.19"/>
    </reaction>
    <physiologicalReaction direction="left-to-right" evidence="1">
        <dbReference type="Rhea" id="RHEA:21257"/>
    </physiologicalReaction>
</comment>
<comment type="pathway">
    <text evidence="1">Metabolic intermediate biosynthesis; chorismate biosynthesis; chorismate from D-erythrose 4-phosphate and phosphoenolpyruvate: step 6/7.</text>
</comment>
<comment type="subunit">
    <text evidence="1">Monomer.</text>
</comment>
<comment type="subcellular location">
    <subcellularLocation>
        <location evidence="1">Cytoplasm</location>
    </subcellularLocation>
</comment>
<comment type="similarity">
    <text evidence="1">Belongs to the EPSP synthase family.</text>
</comment>
<protein>
    <recommendedName>
        <fullName evidence="1">3-phosphoshikimate 1-carboxyvinyltransferase</fullName>
        <ecNumber evidence="1">2.5.1.19</ecNumber>
    </recommendedName>
    <alternativeName>
        <fullName evidence="1">5-enolpyruvylshikimate-3-phosphate synthase</fullName>
        <shortName evidence="1">EPSP synthase</shortName>
        <shortName evidence="1">EPSPS</shortName>
    </alternativeName>
</protein>
<organism>
    <name type="scientific">Laribacter hongkongensis (strain HLHK9)</name>
    <dbReference type="NCBI Taxonomy" id="557598"/>
    <lineage>
        <taxon>Bacteria</taxon>
        <taxon>Pseudomonadati</taxon>
        <taxon>Pseudomonadota</taxon>
        <taxon>Betaproteobacteria</taxon>
        <taxon>Neisseriales</taxon>
        <taxon>Aquaspirillaceae</taxon>
        <taxon>Laribacter</taxon>
    </lineage>
</organism>
<gene>
    <name evidence="1" type="primary">aroA</name>
    <name type="ordered locus">LHK_00867</name>
</gene>
<proteinExistence type="inferred from homology"/>
<dbReference type="EC" id="2.5.1.19" evidence="1"/>
<dbReference type="EMBL" id="CP001154">
    <property type="protein sequence ID" value="ACO73860.1"/>
    <property type="molecule type" value="Genomic_DNA"/>
</dbReference>
<dbReference type="RefSeq" id="WP_012696352.1">
    <property type="nucleotide sequence ID" value="NC_012559.1"/>
</dbReference>
<dbReference type="SMR" id="C1D543"/>
<dbReference type="STRING" id="557598.LHK_00867"/>
<dbReference type="GeneID" id="75110220"/>
<dbReference type="KEGG" id="lhk:LHK_00867"/>
<dbReference type="eggNOG" id="COG0128">
    <property type="taxonomic scope" value="Bacteria"/>
</dbReference>
<dbReference type="HOGENOM" id="CLU_024321_0_0_4"/>
<dbReference type="UniPathway" id="UPA00053">
    <property type="reaction ID" value="UER00089"/>
</dbReference>
<dbReference type="Proteomes" id="UP000002010">
    <property type="component" value="Chromosome"/>
</dbReference>
<dbReference type="GO" id="GO:0005737">
    <property type="term" value="C:cytoplasm"/>
    <property type="evidence" value="ECO:0007669"/>
    <property type="project" value="UniProtKB-SubCell"/>
</dbReference>
<dbReference type="GO" id="GO:0003866">
    <property type="term" value="F:3-phosphoshikimate 1-carboxyvinyltransferase activity"/>
    <property type="evidence" value="ECO:0007669"/>
    <property type="project" value="UniProtKB-UniRule"/>
</dbReference>
<dbReference type="GO" id="GO:0008652">
    <property type="term" value="P:amino acid biosynthetic process"/>
    <property type="evidence" value="ECO:0007669"/>
    <property type="project" value="UniProtKB-KW"/>
</dbReference>
<dbReference type="GO" id="GO:0009073">
    <property type="term" value="P:aromatic amino acid family biosynthetic process"/>
    <property type="evidence" value="ECO:0007669"/>
    <property type="project" value="UniProtKB-KW"/>
</dbReference>
<dbReference type="GO" id="GO:0009423">
    <property type="term" value="P:chorismate biosynthetic process"/>
    <property type="evidence" value="ECO:0007669"/>
    <property type="project" value="UniProtKB-UniRule"/>
</dbReference>
<dbReference type="CDD" id="cd01556">
    <property type="entry name" value="EPSP_synthase"/>
    <property type="match status" value="1"/>
</dbReference>
<dbReference type="FunFam" id="3.65.10.10:FF:000003">
    <property type="entry name" value="3-phosphoshikimate 1-carboxyvinyltransferase"/>
    <property type="match status" value="1"/>
</dbReference>
<dbReference type="Gene3D" id="3.65.10.10">
    <property type="entry name" value="Enolpyruvate transferase domain"/>
    <property type="match status" value="2"/>
</dbReference>
<dbReference type="HAMAP" id="MF_00210">
    <property type="entry name" value="EPSP_synth"/>
    <property type="match status" value="1"/>
</dbReference>
<dbReference type="InterPro" id="IPR001986">
    <property type="entry name" value="Enolpyruvate_Tfrase_dom"/>
</dbReference>
<dbReference type="InterPro" id="IPR036968">
    <property type="entry name" value="Enolpyruvate_Tfrase_sf"/>
</dbReference>
<dbReference type="InterPro" id="IPR006264">
    <property type="entry name" value="EPSP_synthase"/>
</dbReference>
<dbReference type="InterPro" id="IPR023193">
    <property type="entry name" value="EPSP_synthase_CS"/>
</dbReference>
<dbReference type="InterPro" id="IPR013792">
    <property type="entry name" value="RNA3'P_cycl/enolpyr_Trfase_a/b"/>
</dbReference>
<dbReference type="NCBIfam" id="TIGR01356">
    <property type="entry name" value="aroA"/>
    <property type="match status" value="1"/>
</dbReference>
<dbReference type="PANTHER" id="PTHR21090">
    <property type="entry name" value="AROM/DEHYDROQUINATE SYNTHASE"/>
    <property type="match status" value="1"/>
</dbReference>
<dbReference type="PANTHER" id="PTHR21090:SF5">
    <property type="entry name" value="PENTAFUNCTIONAL AROM POLYPEPTIDE"/>
    <property type="match status" value="1"/>
</dbReference>
<dbReference type="Pfam" id="PF00275">
    <property type="entry name" value="EPSP_synthase"/>
    <property type="match status" value="1"/>
</dbReference>
<dbReference type="PIRSF" id="PIRSF000505">
    <property type="entry name" value="EPSPS"/>
    <property type="match status" value="1"/>
</dbReference>
<dbReference type="SUPFAM" id="SSF55205">
    <property type="entry name" value="EPT/RTPC-like"/>
    <property type="match status" value="1"/>
</dbReference>
<dbReference type="PROSITE" id="PS00104">
    <property type="entry name" value="EPSP_SYNTHASE_1"/>
    <property type="match status" value="1"/>
</dbReference>
<dbReference type="PROSITE" id="PS00885">
    <property type="entry name" value="EPSP_SYNTHASE_2"/>
    <property type="match status" value="1"/>
</dbReference>
<keyword id="KW-0028">Amino-acid biosynthesis</keyword>
<keyword id="KW-0057">Aromatic amino acid biosynthesis</keyword>
<keyword id="KW-0963">Cytoplasm</keyword>
<keyword id="KW-1185">Reference proteome</keyword>
<keyword id="KW-0808">Transferase</keyword>
<accession>C1D543</accession>
<evidence type="ECO:0000255" key="1">
    <source>
        <dbReference type="HAMAP-Rule" id="MF_00210"/>
    </source>
</evidence>
<sequence>MEFLDLAPCATLRGTVALPGSKSISNRMLLLAALATGKTQVHGVLEADDTDRMLEALQQLGIRLAQQAHSRTFCIEGCDGRWPVRQADLFLGNAGTAFRPLTAALALAGGDYHLHGIARMHERPIGDLVEALQGLGAVIEYAGTPGYPPLHIHPGHVTPGSTTRVKGNVSSQFLSALLMALPLAGGGTVEVEGELISKPYVDLTLRLIERFGVTVGRDGYSRFTAEAGSHYRSPGAIHVEGDASSASYFLAAGALGGGPVRVTGVGRNSIQGDIRFADALAAMGAGIDMGDDWIEAQAPASGRLRAVTLDCNHIPDAAMTLAVAALFANGTTTLTNIASWRVKETDRIAAMATELGKLGALVETGHDFIRITPPDQLTPGAAIDTYDDHRMAMCFSLASLAVPVRINDPRCVAKTFPGYFDAFASLRA</sequence>